<comment type="function">
    <text>Transcriptional repressor of the arabinose utilization genes. Also regulates its own expression. Binds to two sequences within the promoters of the araABDLMNPQ-abfA operon and the araE gene, and to one sequence in the araR promoter.</text>
</comment>
<comment type="activity regulation">
    <text>Binding to DNA is inhibited by L-arabinose.</text>
</comment>
<comment type="subcellular location">
    <subcellularLocation>
        <location evidence="2">Cytoplasm</location>
    </subcellularLocation>
</comment>
<dbReference type="EMBL" id="X98354">
    <property type="protein sequence ID" value="CAA66999.1"/>
    <property type="molecule type" value="Genomic_DNA"/>
</dbReference>
<dbReference type="EMBL" id="AL009126">
    <property type="protein sequence ID" value="CAB15402.2"/>
    <property type="molecule type" value="Genomic_DNA"/>
</dbReference>
<dbReference type="PIR" id="D69588">
    <property type="entry name" value="D69588"/>
</dbReference>
<dbReference type="RefSeq" id="NP_391277.2">
    <property type="nucleotide sequence ID" value="NC_000964.3"/>
</dbReference>
<dbReference type="RefSeq" id="WP_003243070.1">
    <property type="nucleotide sequence ID" value="NZ_OZ025638.1"/>
</dbReference>
<dbReference type="PDB" id="3TB6">
    <property type="method" value="X-ray"/>
    <property type="resolution" value="2.21 A"/>
    <property type="chains" value="A/B=71-362"/>
</dbReference>
<dbReference type="PDB" id="4EGY">
    <property type="method" value="X-ray"/>
    <property type="resolution" value="2.30 A"/>
    <property type="chains" value="A/B=1-68"/>
</dbReference>
<dbReference type="PDB" id="4EGZ">
    <property type="method" value="X-ray"/>
    <property type="resolution" value="2.30 A"/>
    <property type="chains" value="A/B=1-68"/>
</dbReference>
<dbReference type="PDB" id="4H0E">
    <property type="method" value="X-ray"/>
    <property type="resolution" value="1.97 A"/>
    <property type="chains" value="A/B=1-68"/>
</dbReference>
<dbReference type="PDB" id="5D4R">
    <property type="method" value="X-ray"/>
    <property type="resolution" value="2.07 A"/>
    <property type="chains" value="A/B=1-68"/>
</dbReference>
<dbReference type="PDB" id="5D4S">
    <property type="method" value="X-ray"/>
    <property type="resolution" value="1.97 A"/>
    <property type="chains" value="A/B=1-68"/>
</dbReference>
<dbReference type="PDBsum" id="3TB6"/>
<dbReference type="PDBsum" id="4EGY"/>
<dbReference type="PDBsum" id="4EGZ"/>
<dbReference type="PDBsum" id="4H0E"/>
<dbReference type="PDBsum" id="5D4R"/>
<dbReference type="PDBsum" id="5D4S"/>
<dbReference type="SMR" id="P96711"/>
<dbReference type="FunCoup" id="P96711">
    <property type="interactions" value="26"/>
</dbReference>
<dbReference type="STRING" id="224308.BSU33970"/>
<dbReference type="PaxDb" id="224308-BSU33970"/>
<dbReference type="EnsemblBacteria" id="CAB15402">
    <property type="protein sequence ID" value="CAB15402"/>
    <property type="gene ID" value="BSU_33970"/>
</dbReference>
<dbReference type="GeneID" id="938635"/>
<dbReference type="KEGG" id="bsu:BSU33970"/>
<dbReference type="PATRIC" id="fig|224308.179.peg.3683"/>
<dbReference type="eggNOG" id="COG1609">
    <property type="taxonomic scope" value="Bacteria"/>
</dbReference>
<dbReference type="InParanoid" id="P96711"/>
<dbReference type="OrthoDB" id="9813468at2"/>
<dbReference type="BioCyc" id="BSUB:BSU33970-MONOMER"/>
<dbReference type="EvolutionaryTrace" id="P96711"/>
<dbReference type="Proteomes" id="UP000001570">
    <property type="component" value="Chromosome"/>
</dbReference>
<dbReference type="GO" id="GO:0005737">
    <property type="term" value="C:cytoplasm"/>
    <property type="evidence" value="ECO:0007669"/>
    <property type="project" value="UniProtKB-SubCell"/>
</dbReference>
<dbReference type="GO" id="GO:0003700">
    <property type="term" value="F:DNA-binding transcription factor activity"/>
    <property type="evidence" value="ECO:0000318"/>
    <property type="project" value="GO_Central"/>
</dbReference>
<dbReference type="GO" id="GO:0000976">
    <property type="term" value="F:transcription cis-regulatory region binding"/>
    <property type="evidence" value="ECO:0000318"/>
    <property type="project" value="GO_Central"/>
</dbReference>
<dbReference type="GO" id="GO:0006355">
    <property type="term" value="P:regulation of DNA-templated transcription"/>
    <property type="evidence" value="ECO:0000318"/>
    <property type="project" value="GO_Central"/>
</dbReference>
<dbReference type="CDD" id="cd01541">
    <property type="entry name" value="PBP1_AraR"/>
    <property type="match status" value="1"/>
</dbReference>
<dbReference type="CDD" id="cd07377">
    <property type="entry name" value="WHTH_GntR"/>
    <property type="match status" value="1"/>
</dbReference>
<dbReference type="FunFam" id="1.10.10.10:FF:000079">
    <property type="entry name" value="GntR family transcriptional regulator"/>
    <property type="match status" value="1"/>
</dbReference>
<dbReference type="Gene3D" id="3.40.50.2300">
    <property type="match status" value="2"/>
</dbReference>
<dbReference type="Gene3D" id="1.10.10.10">
    <property type="entry name" value="Winged helix-like DNA-binding domain superfamily/Winged helix DNA-binding domain"/>
    <property type="match status" value="1"/>
</dbReference>
<dbReference type="InterPro" id="IPR033532">
    <property type="entry name" value="AraR_ligand_bind_dom"/>
</dbReference>
<dbReference type="InterPro" id="IPR046335">
    <property type="entry name" value="LacI/GalR-like_sensor"/>
</dbReference>
<dbReference type="InterPro" id="IPR028082">
    <property type="entry name" value="Peripla_BP_I"/>
</dbReference>
<dbReference type="InterPro" id="IPR000524">
    <property type="entry name" value="Tscrpt_reg_HTH_GntR"/>
</dbReference>
<dbReference type="InterPro" id="IPR036388">
    <property type="entry name" value="WH-like_DNA-bd_sf"/>
</dbReference>
<dbReference type="InterPro" id="IPR036390">
    <property type="entry name" value="WH_DNA-bd_sf"/>
</dbReference>
<dbReference type="PANTHER" id="PTHR30146:SF150">
    <property type="entry name" value="ARABINOSE METABOLISM TRANSCRIPTIONAL REPRESSOR"/>
    <property type="match status" value="1"/>
</dbReference>
<dbReference type="PANTHER" id="PTHR30146">
    <property type="entry name" value="LACI-RELATED TRANSCRIPTIONAL REPRESSOR"/>
    <property type="match status" value="1"/>
</dbReference>
<dbReference type="Pfam" id="PF00392">
    <property type="entry name" value="GntR"/>
    <property type="match status" value="1"/>
</dbReference>
<dbReference type="Pfam" id="PF13377">
    <property type="entry name" value="Peripla_BP_3"/>
    <property type="match status" value="1"/>
</dbReference>
<dbReference type="PRINTS" id="PR00035">
    <property type="entry name" value="HTHGNTR"/>
</dbReference>
<dbReference type="SMART" id="SM00345">
    <property type="entry name" value="HTH_GNTR"/>
    <property type="match status" value="1"/>
</dbReference>
<dbReference type="SUPFAM" id="SSF53822">
    <property type="entry name" value="Periplasmic binding protein-like I"/>
    <property type="match status" value="1"/>
</dbReference>
<dbReference type="SUPFAM" id="SSF46785">
    <property type="entry name" value="Winged helix' DNA-binding domain"/>
    <property type="match status" value="1"/>
</dbReference>
<dbReference type="PROSITE" id="PS50949">
    <property type="entry name" value="HTH_GNTR"/>
    <property type="match status" value="1"/>
</dbReference>
<organism>
    <name type="scientific">Bacillus subtilis (strain 168)</name>
    <dbReference type="NCBI Taxonomy" id="224308"/>
    <lineage>
        <taxon>Bacteria</taxon>
        <taxon>Bacillati</taxon>
        <taxon>Bacillota</taxon>
        <taxon>Bacilli</taxon>
        <taxon>Bacillales</taxon>
        <taxon>Bacillaceae</taxon>
        <taxon>Bacillus</taxon>
    </lineage>
</organism>
<accession>P96711</accession>
<evidence type="ECO:0000255" key="1">
    <source>
        <dbReference type="PROSITE-ProRule" id="PRU00307"/>
    </source>
</evidence>
<evidence type="ECO:0000305" key="2"/>
<evidence type="ECO:0007829" key="3">
    <source>
        <dbReference type="PDB" id="3TB6"/>
    </source>
</evidence>
<evidence type="ECO:0007829" key="4">
    <source>
        <dbReference type="PDB" id="5D4S"/>
    </source>
</evidence>
<sequence>MLPKYAQVKEEISSWINQGKILPDQKIPTENELMQQFGVSRHTIRKAIGDLVSQGLLYSVQGGGTFVASRSAKSALHSNKTIGVLTTYISDYIFPSIIRGIESYLSEQGYSMLLTSTNNNPDNERRGLENLLSQHIDGLIVEPTKSALQTPNIGYYLNLEKNGIPFAMINASYAELAAPSFTLDDVKGGMMAAEHLLSLGHTHMMGIFKADDTQGVKRMNGFIQAHRERELFPSPDMIVTFTTEEKESKLLEKVKATLEKNSKHMPTAILCYNDEIALKVIDMLREMDLKVPEDMSIVGYDDSHFAQISEVKLTSVKHPKSVLGKAAAKYVIDCLEHKKPKQEDVIFEPELIIRQSARKLNE</sequence>
<proteinExistence type="evidence at protein level"/>
<protein>
    <recommendedName>
        <fullName>Arabinose metabolism transcriptional repressor</fullName>
    </recommendedName>
</protein>
<reference key="1">
    <citation type="journal article" date="1997" name="J. Bacteriol.">
        <title>Negative regulation of L-arabinose metabolism in Bacillus subtilis: characterization of the araR (araC) gene.</title>
        <authorList>
            <person name="Sa-Nogueira I.M.G."/>
            <person name="Mota L.J."/>
        </authorList>
    </citation>
    <scope>NUCLEOTIDE SEQUENCE [GENOMIC DNA]</scope>
    <source>
        <strain>168</strain>
    </source>
</reference>
<reference key="2">
    <citation type="journal article" date="1997" name="Nature">
        <title>The complete genome sequence of the Gram-positive bacterium Bacillus subtilis.</title>
        <authorList>
            <person name="Kunst F."/>
            <person name="Ogasawara N."/>
            <person name="Moszer I."/>
            <person name="Albertini A.M."/>
            <person name="Alloni G."/>
            <person name="Azevedo V."/>
            <person name="Bertero M.G."/>
            <person name="Bessieres P."/>
            <person name="Bolotin A."/>
            <person name="Borchert S."/>
            <person name="Borriss R."/>
            <person name="Boursier L."/>
            <person name="Brans A."/>
            <person name="Braun M."/>
            <person name="Brignell S.C."/>
            <person name="Bron S."/>
            <person name="Brouillet S."/>
            <person name="Bruschi C.V."/>
            <person name="Caldwell B."/>
            <person name="Capuano V."/>
            <person name="Carter N.M."/>
            <person name="Choi S.-K."/>
            <person name="Codani J.-J."/>
            <person name="Connerton I.F."/>
            <person name="Cummings N.J."/>
            <person name="Daniel R.A."/>
            <person name="Denizot F."/>
            <person name="Devine K.M."/>
            <person name="Duesterhoeft A."/>
            <person name="Ehrlich S.D."/>
            <person name="Emmerson P.T."/>
            <person name="Entian K.-D."/>
            <person name="Errington J."/>
            <person name="Fabret C."/>
            <person name="Ferrari E."/>
            <person name="Foulger D."/>
            <person name="Fritz C."/>
            <person name="Fujita M."/>
            <person name="Fujita Y."/>
            <person name="Fuma S."/>
            <person name="Galizzi A."/>
            <person name="Galleron N."/>
            <person name="Ghim S.-Y."/>
            <person name="Glaser P."/>
            <person name="Goffeau A."/>
            <person name="Golightly E.J."/>
            <person name="Grandi G."/>
            <person name="Guiseppi G."/>
            <person name="Guy B.J."/>
            <person name="Haga K."/>
            <person name="Haiech J."/>
            <person name="Harwood C.R."/>
            <person name="Henaut A."/>
            <person name="Hilbert H."/>
            <person name="Holsappel S."/>
            <person name="Hosono S."/>
            <person name="Hullo M.-F."/>
            <person name="Itaya M."/>
            <person name="Jones L.-M."/>
            <person name="Joris B."/>
            <person name="Karamata D."/>
            <person name="Kasahara Y."/>
            <person name="Klaerr-Blanchard M."/>
            <person name="Klein C."/>
            <person name="Kobayashi Y."/>
            <person name="Koetter P."/>
            <person name="Koningstein G."/>
            <person name="Krogh S."/>
            <person name="Kumano M."/>
            <person name="Kurita K."/>
            <person name="Lapidus A."/>
            <person name="Lardinois S."/>
            <person name="Lauber J."/>
            <person name="Lazarevic V."/>
            <person name="Lee S.-M."/>
            <person name="Levine A."/>
            <person name="Liu H."/>
            <person name="Masuda S."/>
            <person name="Mauel C."/>
            <person name="Medigue C."/>
            <person name="Medina N."/>
            <person name="Mellado R.P."/>
            <person name="Mizuno M."/>
            <person name="Moestl D."/>
            <person name="Nakai S."/>
            <person name="Noback M."/>
            <person name="Noone D."/>
            <person name="O'Reilly M."/>
            <person name="Ogawa K."/>
            <person name="Ogiwara A."/>
            <person name="Oudega B."/>
            <person name="Park S.-H."/>
            <person name="Parro V."/>
            <person name="Pohl T.M."/>
            <person name="Portetelle D."/>
            <person name="Porwollik S."/>
            <person name="Prescott A.M."/>
            <person name="Presecan E."/>
            <person name="Pujic P."/>
            <person name="Purnelle B."/>
            <person name="Rapoport G."/>
            <person name="Rey M."/>
            <person name="Reynolds S."/>
            <person name="Rieger M."/>
            <person name="Rivolta C."/>
            <person name="Rocha E."/>
            <person name="Roche B."/>
            <person name="Rose M."/>
            <person name="Sadaie Y."/>
            <person name="Sato T."/>
            <person name="Scanlan E."/>
            <person name="Schleich S."/>
            <person name="Schroeter R."/>
            <person name="Scoffone F."/>
            <person name="Sekiguchi J."/>
            <person name="Sekowska A."/>
            <person name="Seror S.J."/>
            <person name="Serror P."/>
            <person name="Shin B.-S."/>
            <person name="Soldo B."/>
            <person name="Sorokin A."/>
            <person name="Tacconi E."/>
            <person name="Takagi T."/>
            <person name="Takahashi H."/>
            <person name="Takemaru K."/>
            <person name="Takeuchi M."/>
            <person name="Tamakoshi A."/>
            <person name="Tanaka T."/>
            <person name="Terpstra P."/>
            <person name="Tognoni A."/>
            <person name="Tosato V."/>
            <person name="Uchiyama S."/>
            <person name="Vandenbol M."/>
            <person name="Vannier F."/>
            <person name="Vassarotti A."/>
            <person name="Viari A."/>
            <person name="Wambutt R."/>
            <person name="Wedler E."/>
            <person name="Wedler H."/>
            <person name="Weitzenegger T."/>
            <person name="Winters P."/>
            <person name="Wipat A."/>
            <person name="Yamamoto H."/>
            <person name="Yamane K."/>
            <person name="Yasumoto K."/>
            <person name="Yata K."/>
            <person name="Yoshida K."/>
            <person name="Yoshikawa H.-F."/>
            <person name="Zumstein E."/>
            <person name="Yoshikawa H."/>
            <person name="Danchin A."/>
        </authorList>
    </citation>
    <scope>NUCLEOTIDE SEQUENCE [LARGE SCALE GENOMIC DNA]</scope>
    <source>
        <strain>168</strain>
    </source>
</reference>
<reference key="3">
    <citation type="journal article" date="1999" name="Mol. Microbiol.">
        <title>Mode of action of AraR, the key regulator of L-arabinose metabolism in Bacillus subtilis.</title>
        <authorList>
            <person name="Mota L.J."/>
            <person name="Tavares P."/>
            <person name="Sa-Nogueira I.M.G."/>
        </authorList>
    </citation>
    <scope>PROTEIN SEQUENCE OF 1-10</scope>
    <scope>CHARACTERIZATION</scope>
</reference>
<reference key="4">
    <citation type="journal article" date="2001" name="J. Bacteriol.">
        <title>Control of the arabinose regulon in Bacillus subtilis by AraR in vivo: crucial roles of operators, cooperativity, and DNA looping.</title>
        <authorList>
            <person name="Mota L.J."/>
            <person name="Sarmento L.M."/>
            <person name="Sa-Nogueira I.M.G."/>
        </authorList>
    </citation>
    <scope>CHARACTERIZATION</scope>
    <source>
        <strain>168</strain>
    </source>
</reference>
<gene>
    <name type="primary">araR</name>
    <name type="synonym">araC</name>
    <name type="synonym">yvbS</name>
    <name type="ordered locus">BSU33970</name>
</gene>
<feature type="chain" id="PRO_0000050620" description="Arabinose metabolism transcriptional repressor">
    <location>
        <begin position="1"/>
        <end position="362"/>
    </location>
</feature>
<feature type="domain" description="HTH gntR-type" evidence="1">
    <location>
        <begin position="1"/>
        <end position="70"/>
    </location>
</feature>
<feature type="DNA-binding region" description="H-T-H motif" evidence="1">
    <location>
        <begin position="30"/>
        <end position="49"/>
    </location>
</feature>
<feature type="helix" evidence="4">
    <location>
        <begin position="4"/>
        <end position="15"/>
    </location>
</feature>
<feature type="turn" evidence="4">
    <location>
        <begin position="16"/>
        <end position="19"/>
    </location>
</feature>
<feature type="helix" evidence="4">
    <location>
        <begin position="30"/>
        <end position="37"/>
    </location>
</feature>
<feature type="helix" evidence="4">
    <location>
        <begin position="41"/>
        <end position="53"/>
    </location>
</feature>
<feature type="strand" evidence="4">
    <location>
        <begin position="56"/>
        <end position="60"/>
    </location>
</feature>
<feature type="turn" evidence="4">
    <location>
        <begin position="61"/>
        <end position="63"/>
    </location>
</feature>
<feature type="strand" evidence="4">
    <location>
        <begin position="64"/>
        <end position="67"/>
    </location>
</feature>
<feature type="strand" evidence="3">
    <location>
        <begin position="81"/>
        <end position="87"/>
    </location>
</feature>
<feature type="strand" evidence="3">
    <location>
        <begin position="89"/>
        <end position="91"/>
    </location>
</feature>
<feature type="helix" evidence="3">
    <location>
        <begin position="94"/>
        <end position="107"/>
    </location>
</feature>
<feature type="strand" evidence="3">
    <location>
        <begin position="111"/>
        <end position="116"/>
    </location>
</feature>
<feature type="helix" evidence="3">
    <location>
        <begin position="121"/>
        <end position="133"/>
    </location>
</feature>
<feature type="strand" evidence="3">
    <location>
        <begin position="137"/>
        <end position="141"/>
    </location>
</feature>
<feature type="helix" evidence="3">
    <location>
        <begin position="153"/>
        <end position="161"/>
    </location>
</feature>
<feature type="strand" evidence="3">
    <location>
        <begin position="166"/>
        <end position="171"/>
    </location>
</feature>
<feature type="strand" evidence="3">
    <location>
        <begin position="180"/>
        <end position="183"/>
    </location>
</feature>
<feature type="helix" evidence="3">
    <location>
        <begin position="185"/>
        <end position="198"/>
    </location>
</feature>
<feature type="strand" evidence="3">
    <location>
        <begin position="203"/>
        <end position="212"/>
    </location>
</feature>
<feature type="helix" evidence="3">
    <location>
        <begin position="213"/>
        <end position="228"/>
    </location>
</feature>
<feature type="helix" evidence="3">
    <location>
        <begin position="235"/>
        <end position="237"/>
    </location>
</feature>
<feature type="strand" evidence="3">
    <location>
        <begin position="238"/>
        <end position="241"/>
    </location>
</feature>
<feature type="helix" evidence="3">
    <location>
        <begin position="243"/>
        <end position="246"/>
    </location>
</feature>
<feature type="helix" evidence="3">
    <location>
        <begin position="249"/>
        <end position="260"/>
    </location>
</feature>
<feature type="turn" evidence="3">
    <location>
        <begin position="261"/>
        <end position="263"/>
    </location>
</feature>
<feature type="strand" evidence="3">
    <location>
        <begin position="267"/>
        <end position="270"/>
    </location>
</feature>
<feature type="helix" evidence="3">
    <location>
        <begin position="274"/>
        <end position="286"/>
    </location>
</feature>
<feature type="turn" evidence="3">
    <location>
        <begin position="291"/>
        <end position="294"/>
    </location>
</feature>
<feature type="strand" evidence="3">
    <location>
        <begin position="296"/>
        <end position="298"/>
    </location>
</feature>
<feature type="helix" evidence="3">
    <location>
        <begin position="305"/>
        <end position="308"/>
    </location>
</feature>
<feature type="strand" evidence="3">
    <location>
        <begin position="309"/>
        <end position="311"/>
    </location>
</feature>
<feature type="strand" evidence="3">
    <location>
        <begin position="314"/>
        <end position="317"/>
    </location>
</feature>
<feature type="helix" evidence="3">
    <location>
        <begin position="321"/>
        <end position="335"/>
    </location>
</feature>
<feature type="strand" evidence="3">
    <location>
        <begin position="345"/>
        <end position="347"/>
    </location>
</feature>
<feature type="strand" evidence="3">
    <location>
        <begin position="350"/>
        <end position="352"/>
    </location>
</feature>
<name>ARAR_BACSU</name>
<keyword id="KW-0002">3D-structure</keyword>
<keyword id="KW-0963">Cytoplasm</keyword>
<keyword id="KW-0903">Direct protein sequencing</keyword>
<keyword id="KW-0238">DNA-binding</keyword>
<keyword id="KW-1185">Reference proteome</keyword>
<keyword id="KW-0678">Repressor</keyword>
<keyword id="KW-0804">Transcription</keyword>
<keyword id="KW-0805">Transcription regulation</keyword>